<reference key="1">
    <citation type="journal article" date="2006" name="Proc. Natl. Acad. Sci. U.S.A.">
        <title>Molecular genetic anatomy of inter- and intraserotype variation in the human bacterial pathogen group A Streptococcus.</title>
        <authorList>
            <person name="Beres S.B."/>
            <person name="Richter E.W."/>
            <person name="Nagiec M.J."/>
            <person name="Sumby P."/>
            <person name="Porcella S.F."/>
            <person name="DeLeo F.R."/>
            <person name="Musser J.M."/>
        </authorList>
    </citation>
    <scope>NUCLEOTIDE SEQUENCE [LARGE SCALE GENOMIC DNA]</scope>
    <source>
        <strain>MGAS10750</strain>
    </source>
</reference>
<organism>
    <name type="scientific">Streptococcus pyogenes serotype M4 (strain MGAS10750)</name>
    <dbReference type="NCBI Taxonomy" id="370554"/>
    <lineage>
        <taxon>Bacteria</taxon>
        <taxon>Bacillati</taxon>
        <taxon>Bacillota</taxon>
        <taxon>Bacilli</taxon>
        <taxon>Lactobacillales</taxon>
        <taxon>Streptococcaceae</taxon>
        <taxon>Streptococcus</taxon>
    </lineage>
</organism>
<dbReference type="EMBL" id="CP000262">
    <property type="protein sequence ID" value="ABF37612.1"/>
    <property type="molecule type" value="Genomic_DNA"/>
</dbReference>
<dbReference type="SMR" id="Q1J7G2"/>
<dbReference type="KEGG" id="spi:MGAS10750_Spy0662"/>
<dbReference type="HOGENOM" id="CLU_085114_1_2_9"/>
<dbReference type="Proteomes" id="UP000002434">
    <property type="component" value="Chromosome"/>
</dbReference>
<dbReference type="GO" id="GO:0005886">
    <property type="term" value="C:plasma membrane"/>
    <property type="evidence" value="ECO:0007669"/>
    <property type="project" value="UniProtKB-SubCell"/>
</dbReference>
<dbReference type="GO" id="GO:0045259">
    <property type="term" value="C:proton-transporting ATP synthase complex"/>
    <property type="evidence" value="ECO:0007669"/>
    <property type="project" value="UniProtKB-KW"/>
</dbReference>
<dbReference type="GO" id="GO:0046933">
    <property type="term" value="F:proton-transporting ATP synthase activity, rotational mechanism"/>
    <property type="evidence" value="ECO:0007669"/>
    <property type="project" value="UniProtKB-UniRule"/>
</dbReference>
<dbReference type="Gene3D" id="1.10.520.20">
    <property type="entry name" value="N-terminal domain of the delta subunit of the F1F0-ATP synthase"/>
    <property type="match status" value="1"/>
</dbReference>
<dbReference type="HAMAP" id="MF_01416">
    <property type="entry name" value="ATP_synth_delta_bact"/>
    <property type="match status" value="1"/>
</dbReference>
<dbReference type="InterPro" id="IPR026015">
    <property type="entry name" value="ATP_synth_OSCP/delta_N_sf"/>
</dbReference>
<dbReference type="InterPro" id="IPR000711">
    <property type="entry name" value="ATPase_OSCP/dsu"/>
</dbReference>
<dbReference type="NCBIfam" id="TIGR01145">
    <property type="entry name" value="ATP_synt_delta"/>
    <property type="match status" value="1"/>
</dbReference>
<dbReference type="NCBIfam" id="NF004401">
    <property type="entry name" value="PRK05758.2-1"/>
    <property type="match status" value="1"/>
</dbReference>
<dbReference type="PANTHER" id="PTHR11910">
    <property type="entry name" value="ATP SYNTHASE DELTA CHAIN"/>
    <property type="match status" value="1"/>
</dbReference>
<dbReference type="Pfam" id="PF00213">
    <property type="entry name" value="OSCP"/>
    <property type="match status" value="1"/>
</dbReference>
<dbReference type="PRINTS" id="PR00125">
    <property type="entry name" value="ATPASEDELTA"/>
</dbReference>
<dbReference type="SUPFAM" id="SSF47928">
    <property type="entry name" value="N-terminal domain of the delta subunit of the F1F0-ATP synthase"/>
    <property type="match status" value="1"/>
</dbReference>
<proteinExistence type="inferred from homology"/>
<accession>Q1J7G2</accession>
<name>ATPD_STRPF</name>
<feature type="chain" id="PRO_0000371163" description="ATP synthase subunit delta">
    <location>
        <begin position="1"/>
        <end position="178"/>
    </location>
</feature>
<comment type="function">
    <text evidence="1">F(1)F(0) ATP synthase produces ATP from ADP in the presence of a proton or sodium gradient. F-type ATPases consist of two structural domains, F(1) containing the extramembraneous catalytic core and F(0) containing the membrane proton channel, linked together by a central stalk and a peripheral stalk. During catalysis, ATP synthesis in the catalytic domain of F(1) is coupled via a rotary mechanism of the central stalk subunits to proton translocation.</text>
</comment>
<comment type="function">
    <text evidence="1">This protein is part of the stalk that links CF(0) to CF(1). It either transmits conformational changes from CF(0) to CF(1) or is implicated in proton conduction.</text>
</comment>
<comment type="subunit">
    <text evidence="1">F-type ATPases have 2 components, F(1) - the catalytic core - and F(0) - the membrane proton channel. F(1) has five subunits: alpha(3), beta(3), gamma(1), delta(1), epsilon(1). F(0) has three main subunits: a(1), b(2) and c(10-14). The alpha and beta chains form an alternating ring which encloses part of the gamma chain. F(1) is attached to F(0) by a central stalk formed by the gamma and epsilon chains, while a peripheral stalk is formed by the delta and b chains.</text>
</comment>
<comment type="subcellular location">
    <subcellularLocation>
        <location evidence="1">Cell membrane</location>
        <topology evidence="1">Peripheral membrane protein</topology>
    </subcellularLocation>
</comment>
<comment type="similarity">
    <text evidence="1">Belongs to the ATPase delta chain family.</text>
</comment>
<evidence type="ECO:0000255" key="1">
    <source>
        <dbReference type="HAMAP-Rule" id="MF_01416"/>
    </source>
</evidence>
<keyword id="KW-0066">ATP synthesis</keyword>
<keyword id="KW-1003">Cell membrane</keyword>
<keyword id="KW-0139">CF(1)</keyword>
<keyword id="KW-0375">Hydrogen ion transport</keyword>
<keyword id="KW-0406">Ion transport</keyword>
<keyword id="KW-0472">Membrane</keyword>
<keyword id="KW-0813">Transport</keyword>
<gene>
    <name evidence="1" type="primary">atpH</name>
    <name type="ordered locus">MGAS10750_Spy0662</name>
</gene>
<protein>
    <recommendedName>
        <fullName evidence="1">ATP synthase subunit delta</fullName>
    </recommendedName>
    <alternativeName>
        <fullName evidence="1">ATP synthase F(1) sector subunit delta</fullName>
    </alternativeName>
    <alternativeName>
        <fullName evidence="1">F-type ATPase subunit delta</fullName>
        <shortName evidence="1">F-ATPase subunit delta</shortName>
    </alternativeName>
</protein>
<sequence>MTKKEQALIEQYAKSLVEVASEHHSLDTLQADVLAILETFETTNLDQSLSSLAVPHAEKIKLLTLLERNNSVYMNNFLNLILQNEREAYLYQMLQAVLNEIAIVSNQYNVTVTSSLPLTEEQKSRVRAVVAKKFAVTAGRLIEKVDPSLIGGFIISVNNKVIDTSIRRQLQAFKMNLK</sequence>